<feature type="chain" id="PRO_0000058327" description="Peroxisomal membrane protein PEX14">
    <location>
        <begin position="1"/>
        <end position="351"/>
    </location>
</feature>
<feature type="region of interest" description="Disordered" evidence="2">
    <location>
        <begin position="54"/>
        <end position="75"/>
    </location>
</feature>
<feature type="region of interest" description="Disordered" evidence="2">
    <location>
        <begin position="243"/>
        <end position="351"/>
    </location>
</feature>
<feature type="short sequence motif" description="SH3-binding" evidence="1">
    <location>
        <begin position="83"/>
        <end position="91"/>
    </location>
</feature>
<feature type="compositionally biased region" description="Low complexity" evidence="2">
    <location>
        <begin position="60"/>
        <end position="70"/>
    </location>
</feature>
<feature type="compositionally biased region" description="Polar residues" evidence="2">
    <location>
        <begin position="245"/>
        <end position="258"/>
    </location>
</feature>
<feature type="compositionally biased region" description="Basic and acidic residues" evidence="2">
    <location>
        <begin position="283"/>
        <end position="293"/>
    </location>
</feature>
<feature type="compositionally biased region" description="Polar residues" evidence="2">
    <location>
        <begin position="294"/>
        <end position="303"/>
    </location>
</feature>
<feature type="compositionally biased region" description="Low complexity" evidence="2">
    <location>
        <begin position="320"/>
        <end position="334"/>
    </location>
</feature>
<dbReference type="EMBL" id="U46195">
    <property type="protein sequence ID" value="AAB40596.1"/>
    <property type="molecule type" value="Genomic_DNA"/>
</dbReference>
<dbReference type="SMR" id="P78723"/>
<dbReference type="ELM" id="P78723"/>
<dbReference type="PhylomeDB" id="P78723"/>
<dbReference type="GO" id="GO:1990429">
    <property type="term" value="C:peroxisomal importomer complex"/>
    <property type="evidence" value="ECO:0007669"/>
    <property type="project" value="TreeGrafter"/>
</dbReference>
<dbReference type="GO" id="GO:0005778">
    <property type="term" value="C:peroxisomal membrane"/>
    <property type="evidence" value="ECO:0000314"/>
    <property type="project" value="UniProtKB"/>
</dbReference>
<dbReference type="GO" id="GO:0005102">
    <property type="term" value="F:signaling receptor binding"/>
    <property type="evidence" value="ECO:0007669"/>
    <property type="project" value="TreeGrafter"/>
</dbReference>
<dbReference type="GO" id="GO:0016560">
    <property type="term" value="P:protein import into peroxisome matrix, docking"/>
    <property type="evidence" value="ECO:0000315"/>
    <property type="project" value="UniProtKB"/>
</dbReference>
<dbReference type="Gene3D" id="1.10.10.10">
    <property type="entry name" value="Winged helix-like DNA-binding domain superfamily/Winged helix DNA-binding domain"/>
    <property type="match status" value="1"/>
</dbReference>
<dbReference type="InterPro" id="IPR025655">
    <property type="entry name" value="PEX14"/>
</dbReference>
<dbReference type="InterPro" id="IPR006785">
    <property type="entry name" value="Pex14_N"/>
</dbReference>
<dbReference type="InterPro" id="IPR036388">
    <property type="entry name" value="WH-like_DNA-bd_sf"/>
</dbReference>
<dbReference type="PANTHER" id="PTHR23058">
    <property type="entry name" value="PEROXISOMAL MEMBRANE PROTEIN PEX14"/>
    <property type="match status" value="1"/>
</dbReference>
<dbReference type="PANTHER" id="PTHR23058:SF0">
    <property type="entry name" value="PEROXISOMAL MEMBRANE PROTEIN PEX14"/>
    <property type="match status" value="1"/>
</dbReference>
<dbReference type="Pfam" id="PF04695">
    <property type="entry name" value="Pex14_N"/>
    <property type="match status" value="1"/>
</dbReference>
<organism>
    <name type="scientific">Pichia angusta</name>
    <name type="common">Yeast</name>
    <name type="synonym">Hansenula polymorpha</name>
    <dbReference type="NCBI Taxonomy" id="870730"/>
    <lineage>
        <taxon>Eukaryota</taxon>
        <taxon>Fungi</taxon>
        <taxon>Dikarya</taxon>
        <taxon>Ascomycota</taxon>
        <taxon>Saccharomycotina</taxon>
        <taxon>Pichiomycetes</taxon>
        <taxon>Pichiales</taxon>
        <taxon>Pichiaceae</taxon>
        <taxon>Ogataea</taxon>
    </lineage>
</organism>
<gene>
    <name evidence="4" type="primary">PEX14</name>
    <name type="synonym">PER10</name>
</gene>
<proteinExistence type="inferred from homology"/>
<name>PEX14_PICAN</name>
<reference key="1">
    <citation type="journal article" date="1997" name="EMBO J.">
        <title>The Hansenula polymorpha PEX14 gene encodes a novel peroxisomal membrane protein essential for peroxisome biogenesis.</title>
        <authorList>
            <person name="Komori M."/>
            <person name="Rasmussen S.W."/>
            <person name="Kiel J.A.K.W."/>
            <person name="Baerends R.J.S."/>
            <person name="Cregg J.M."/>
            <person name="van der Klei I.J."/>
            <person name="Veenhuis M."/>
        </authorList>
    </citation>
    <scope>NUCLEOTIDE SEQUENCE [GENOMIC DNA]</scope>
    <scope>SUBCELLULAR LOCATION</scope>
    <scope>DISRUPTION PHENOTYPE</scope>
    <source>
        <strain>ATCC 34438 / CBS 4732 / DSM 70277 / JCM 3621 / NBRC 1476 / NRRL Y-5445</strain>
    </source>
</reference>
<accession>P78723</accession>
<sequence>MSQQPATTSRAELVSSAVEFLLDQSIADSPLAKKVEFLESKGLTQQEIEEALQKARTGTVQASPSQQSVVPPRPPVPDYYPSAPPLPERDWKDYFIMATATAGISYGVYQFVKRYVVPKILPPSKTQLEQDKAAIDHEFQRVESLLEKFEADQKEFYQKQEAKSKKIDETLQEVDEIINKTNEKNLNNEETLKYLKLEIENIKTTLLKTLDSQKATLNAELSAMEKQLQDIKFDIKTSGIAVAPQLSTPPSESTSRQSPAAEAKPKINLNIPPTTSIPSLRDVLSREKDKDVNSDSIAQYEQRTANEKDVERSIPAWQLSASNGGSSTTSGVAGDEQKEPKRGIPAWQLNA</sequence>
<keyword id="KW-0472">Membrane</keyword>
<keyword id="KW-0576">Peroxisome</keyword>
<keyword id="KW-0653">Protein transport</keyword>
<keyword id="KW-0811">Translocation</keyword>
<keyword id="KW-0813">Transport</keyword>
<comment type="function">
    <text evidence="1">Component of the PEX13-PEX14 docking complex, a translocon channel that specifically mediates the import of peroxisomal cargo proteins bound to PEX5 receptor. The PEX13-PEX14 docking complex forms a large import pore which can be opened to a diameter of about 9 nm. Mechanistically, PEX5 receptor along with cargo proteins associates with the PEX14 subunit of the PEX13-PEX14 docking complex in the cytosol, leading to the insertion of the receptor into the organelle membrane with the concomitant translocation of the cargo into the peroxisome matrix.</text>
</comment>
<comment type="subunit">
    <text evidence="1">Interacts with PEX13 (via SH3 domain); forming the PEX13-PEX14 docking complex. Interacts with PEX5 (via WxxxF/Y motifs).</text>
</comment>
<comment type="subcellular location">
    <subcellularLocation>
        <location evidence="3">Peroxisome membrane</location>
        <topology evidence="1">Peripheral membrane protein</topology>
        <orientation evidence="1">Cytoplasmic side</orientation>
    </subcellularLocation>
</comment>
<comment type="disruption phenotype">
    <text evidence="3">Cells show an absence of normal peroxisomes.</text>
</comment>
<comment type="similarity">
    <text evidence="5">Belongs to the peroxin-14 family.</text>
</comment>
<evidence type="ECO:0000250" key="1">
    <source>
        <dbReference type="UniProtKB" id="P53112"/>
    </source>
</evidence>
<evidence type="ECO:0000256" key="2">
    <source>
        <dbReference type="SAM" id="MobiDB-lite"/>
    </source>
</evidence>
<evidence type="ECO:0000269" key="3">
    <source>
    </source>
</evidence>
<evidence type="ECO:0000303" key="4">
    <source>
    </source>
</evidence>
<evidence type="ECO:0000305" key="5"/>
<protein>
    <recommendedName>
        <fullName evidence="5">Peroxisomal membrane protein PEX14</fullName>
    </recommendedName>
    <alternativeName>
        <fullName>Peroxin-14</fullName>
    </alternativeName>
    <alternativeName>
        <fullName>Peroxisomal membrane protein PER10</fullName>
    </alternativeName>
</protein>